<keyword id="KW-0028">Amino-acid biosynthesis</keyword>
<keyword id="KW-0963">Cytoplasm</keyword>
<keyword id="KW-0220">Diaminopimelate biosynthesis</keyword>
<keyword id="KW-0457">Lysine biosynthesis</keyword>
<keyword id="KW-0520">NAD</keyword>
<keyword id="KW-0521">NADP</keyword>
<keyword id="KW-0560">Oxidoreductase</keyword>
<accession>B8E4S9</accession>
<proteinExistence type="inferred from homology"/>
<dbReference type="EC" id="1.17.1.8" evidence="1"/>
<dbReference type="EMBL" id="CP001252">
    <property type="protein sequence ID" value="ACK45565.1"/>
    <property type="molecule type" value="Genomic_DNA"/>
</dbReference>
<dbReference type="RefSeq" id="WP_006082785.1">
    <property type="nucleotide sequence ID" value="NC_011663.1"/>
</dbReference>
<dbReference type="SMR" id="B8E4S9"/>
<dbReference type="GeneID" id="11773568"/>
<dbReference type="KEGG" id="sbp:Sbal223_1050"/>
<dbReference type="HOGENOM" id="CLU_047479_2_1_6"/>
<dbReference type="UniPathway" id="UPA00034">
    <property type="reaction ID" value="UER00018"/>
</dbReference>
<dbReference type="Proteomes" id="UP000002507">
    <property type="component" value="Chromosome"/>
</dbReference>
<dbReference type="GO" id="GO:0005829">
    <property type="term" value="C:cytosol"/>
    <property type="evidence" value="ECO:0007669"/>
    <property type="project" value="TreeGrafter"/>
</dbReference>
<dbReference type="GO" id="GO:0008839">
    <property type="term" value="F:4-hydroxy-tetrahydrodipicolinate reductase"/>
    <property type="evidence" value="ECO:0007669"/>
    <property type="project" value="UniProtKB-EC"/>
</dbReference>
<dbReference type="GO" id="GO:0051287">
    <property type="term" value="F:NAD binding"/>
    <property type="evidence" value="ECO:0007669"/>
    <property type="project" value="UniProtKB-UniRule"/>
</dbReference>
<dbReference type="GO" id="GO:0050661">
    <property type="term" value="F:NADP binding"/>
    <property type="evidence" value="ECO:0007669"/>
    <property type="project" value="UniProtKB-UniRule"/>
</dbReference>
<dbReference type="GO" id="GO:0016726">
    <property type="term" value="F:oxidoreductase activity, acting on CH or CH2 groups, NAD or NADP as acceptor"/>
    <property type="evidence" value="ECO:0007669"/>
    <property type="project" value="UniProtKB-UniRule"/>
</dbReference>
<dbReference type="GO" id="GO:0019877">
    <property type="term" value="P:diaminopimelate biosynthetic process"/>
    <property type="evidence" value="ECO:0007669"/>
    <property type="project" value="UniProtKB-UniRule"/>
</dbReference>
<dbReference type="GO" id="GO:0009089">
    <property type="term" value="P:lysine biosynthetic process via diaminopimelate"/>
    <property type="evidence" value="ECO:0007669"/>
    <property type="project" value="UniProtKB-UniRule"/>
</dbReference>
<dbReference type="CDD" id="cd02274">
    <property type="entry name" value="DHDPR_N"/>
    <property type="match status" value="1"/>
</dbReference>
<dbReference type="FunFam" id="3.30.360.10:FF:000004">
    <property type="entry name" value="4-hydroxy-tetrahydrodipicolinate reductase"/>
    <property type="match status" value="1"/>
</dbReference>
<dbReference type="FunFam" id="3.40.50.720:FF:000048">
    <property type="entry name" value="4-hydroxy-tetrahydrodipicolinate reductase"/>
    <property type="match status" value="1"/>
</dbReference>
<dbReference type="Gene3D" id="3.30.360.10">
    <property type="entry name" value="Dihydrodipicolinate Reductase, domain 2"/>
    <property type="match status" value="1"/>
</dbReference>
<dbReference type="Gene3D" id="3.40.50.720">
    <property type="entry name" value="NAD(P)-binding Rossmann-like Domain"/>
    <property type="match status" value="1"/>
</dbReference>
<dbReference type="HAMAP" id="MF_00102">
    <property type="entry name" value="DapB"/>
    <property type="match status" value="1"/>
</dbReference>
<dbReference type="InterPro" id="IPR022663">
    <property type="entry name" value="DapB_C"/>
</dbReference>
<dbReference type="InterPro" id="IPR000846">
    <property type="entry name" value="DapB_N"/>
</dbReference>
<dbReference type="InterPro" id="IPR022664">
    <property type="entry name" value="DapB_N_CS"/>
</dbReference>
<dbReference type="InterPro" id="IPR023940">
    <property type="entry name" value="DHDPR_bac"/>
</dbReference>
<dbReference type="InterPro" id="IPR036291">
    <property type="entry name" value="NAD(P)-bd_dom_sf"/>
</dbReference>
<dbReference type="NCBIfam" id="TIGR00036">
    <property type="entry name" value="dapB"/>
    <property type="match status" value="1"/>
</dbReference>
<dbReference type="PANTHER" id="PTHR20836:SF0">
    <property type="entry name" value="4-HYDROXY-TETRAHYDRODIPICOLINATE REDUCTASE 1, CHLOROPLASTIC-RELATED"/>
    <property type="match status" value="1"/>
</dbReference>
<dbReference type="PANTHER" id="PTHR20836">
    <property type="entry name" value="DIHYDRODIPICOLINATE REDUCTASE"/>
    <property type="match status" value="1"/>
</dbReference>
<dbReference type="Pfam" id="PF05173">
    <property type="entry name" value="DapB_C"/>
    <property type="match status" value="1"/>
</dbReference>
<dbReference type="Pfam" id="PF01113">
    <property type="entry name" value="DapB_N"/>
    <property type="match status" value="1"/>
</dbReference>
<dbReference type="PIRSF" id="PIRSF000161">
    <property type="entry name" value="DHPR"/>
    <property type="match status" value="1"/>
</dbReference>
<dbReference type="SUPFAM" id="SSF55347">
    <property type="entry name" value="Glyceraldehyde-3-phosphate dehydrogenase-like, C-terminal domain"/>
    <property type="match status" value="1"/>
</dbReference>
<dbReference type="SUPFAM" id="SSF51735">
    <property type="entry name" value="NAD(P)-binding Rossmann-fold domains"/>
    <property type="match status" value="1"/>
</dbReference>
<dbReference type="PROSITE" id="PS01298">
    <property type="entry name" value="DAPB"/>
    <property type="match status" value="1"/>
</dbReference>
<comment type="function">
    <text evidence="1">Catalyzes the conversion of 4-hydroxy-tetrahydrodipicolinate (HTPA) to tetrahydrodipicolinate.</text>
</comment>
<comment type="catalytic activity">
    <reaction evidence="1">
        <text>(S)-2,3,4,5-tetrahydrodipicolinate + NAD(+) + H2O = (2S,4S)-4-hydroxy-2,3,4,5-tetrahydrodipicolinate + NADH + H(+)</text>
        <dbReference type="Rhea" id="RHEA:35323"/>
        <dbReference type="ChEBI" id="CHEBI:15377"/>
        <dbReference type="ChEBI" id="CHEBI:15378"/>
        <dbReference type="ChEBI" id="CHEBI:16845"/>
        <dbReference type="ChEBI" id="CHEBI:57540"/>
        <dbReference type="ChEBI" id="CHEBI:57945"/>
        <dbReference type="ChEBI" id="CHEBI:67139"/>
        <dbReference type="EC" id="1.17.1.8"/>
    </reaction>
</comment>
<comment type="catalytic activity">
    <reaction evidence="1">
        <text>(S)-2,3,4,5-tetrahydrodipicolinate + NADP(+) + H2O = (2S,4S)-4-hydroxy-2,3,4,5-tetrahydrodipicolinate + NADPH + H(+)</text>
        <dbReference type="Rhea" id="RHEA:35331"/>
        <dbReference type="ChEBI" id="CHEBI:15377"/>
        <dbReference type="ChEBI" id="CHEBI:15378"/>
        <dbReference type="ChEBI" id="CHEBI:16845"/>
        <dbReference type="ChEBI" id="CHEBI:57783"/>
        <dbReference type="ChEBI" id="CHEBI:58349"/>
        <dbReference type="ChEBI" id="CHEBI:67139"/>
        <dbReference type="EC" id="1.17.1.8"/>
    </reaction>
</comment>
<comment type="pathway">
    <text evidence="1">Amino-acid biosynthesis; L-lysine biosynthesis via DAP pathway; (S)-tetrahydrodipicolinate from L-aspartate: step 4/4.</text>
</comment>
<comment type="subcellular location">
    <subcellularLocation>
        <location evidence="1">Cytoplasm</location>
    </subcellularLocation>
</comment>
<comment type="similarity">
    <text evidence="1">Belongs to the DapB family.</text>
</comment>
<comment type="caution">
    <text evidence="2">Was originally thought to be a dihydrodipicolinate reductase (DHDPR), catalyzing the conversion of dihydrodipicolinate to tetrahydrodipicolinate. However, it was shown in E.coli that the substrate of the enzymatic reaction is not dihydrodipicolinate (DHDP) but in fact (2S,4S)-4-hydroxy-2,3,4,5-tetrahydrodipicolinic acid (HTPA), the product released by the DapA-catalyzed reaction.</text>
</comment>
<protein>
    <recommendedName>
        <fullName evidence="1">4-hydroxy-tetrahydrodipicolinate reductase</fullName>
        <shortName evidence="1">HTPA reductase</shortName>
        <ecNumber evidence="1">1.17.1.8</ecNumber>
    </recommendedName>
</protein>
<evidence type="ECO:0000255" key="1">
    <source>
        <dbReference type="HAMAP-Rule" id="MF_00102"/>
    </source>
</evidence>
<evidence type="ECO:0000305" key="2"/>
<sequence>MSGQVRVAIVGAGGRMGRTLIEAAYNHDHILLGAAIERAGSSLVGVDAGELAGVGKLKVMIMDSLDYATDDFDVLIDFTAPDASIVHLDWCVRHKKAMVIGTTGFNHAQKEQINAFAEQTPVVMAPNMSVGVNLMWKLLELAAEVMGDYTDIEIIEGHHRHKKDAPSGTALKMGEVIAKTLGRDLEKCAVYGREGITGERDRETIGFATIRAGDLVGEHTAMFADIGERLEITHKASSRMTFANGAMRAAHWLVEQKPGLYDMQQVLGLH</sequence>
<name>DAPB_SHEB2</name>
<gene>
    <name evidence="1" type="primary">dapB</name>
    <name type="ordered locus">Sbal223_1050</name>
</gene>
<reference key="1">
    <citation type="submission" date="2008-12" db="EMBL/GenBank/DDBJ databases">
        <title>Complete sequence of chromosome of Shewanella baltica OS223.</title>
        <authorList>
            <consortium name="US DOE Joint Genome Institute"/>
            <person name="Lucas S."/>
            <person name="Copeland A."/>
            <person name="Lapidus A."/>
            <person name="Glavina del Rio T."/>
            <person name="Dalin E."/>
            <person name="Tice H."/>
            <person name="Bruce D."/>
            <person name="Goodwin L."/>
            <person name="Pitluck S."/>
            <person name="Chertkov O."/>
            <person name="Meincke L."/>
            <person name="Brettin T."/>
            <person name="Detter J.C."/>
            <person name="Han C."/>
            <person name="Kuske C.R."/>
            <person name="Larimer F."/>
            <person name="Land M."/>
            <person name="Hauser L."/>
            <person name="Kyrpides N."/>
            <person name="Ovchinnikova G."/>
            <person name="Brettar I."/>
            <person name="Rodrigues J."/>
            <person name="Konstantinidis K."/>
            <person name="Tiedje J."/>
        </authorList>
    </citation>
    <scope>NUCLEOTIDE SEQUENCE [LARGE SCALE GENOMIC DNA]</scope>
    <source>
        <strain>OS223</strain>
    </source>
</reference>
<feature type="chain" id="PRO_1000118865" description="4-hydroxy-tetrahydrodipicolinate reductase">
    <location>
        <begin position="1"/>
        <end position="270"/>
    </location>
</feature>
<feature type="active site" description="Proton donor/acceptor" evidence="1">
    <location>
        <position position="158"/>
    </location>
</feature>
<feature type="active site" description="Proton donor" evidence="1">
    <location>
        <position position="162"/>
    </location>
</feature>
<feature type="binding site" evidence="1">
    <location>
        <begin position="11"/>
        <end position="16"/>
    </location>
    <ligand>
        <name>NAD(+)</name>
        <dbReference type="ChEBI" id="CHEBI:57540"/>
    </ligand>
</feature>
<feature type="binding site" evidence="1">
    <location>
        <position position="37"/>
    </location>
    <ligand>
        <name>NAD(+)</name>
        <dbReference type="ChEBI" id="CHEBI:57540"/>
    </ligand>
</feature>
<feature type="binding site" evidence="1">
    <location>
        <position position="38"/>
    </location>
    <ligand>
        <name>NADP(+)</name>
        <dbReference type="ChEBI" id="CHEBI:58349"/>
    </ligand>
</feature>
<feature type="binding site" evidence="1">
    <location>
        <begin position="101"/>
        <end position="103"/>
    </location>
    <ligand>
        <name>NAD(+)</name>
        <dbReference type="ChEBI" id="CHEBI:57540"/>
    </ligand>
</feature>
<feature type="binding site" evidence="1">
    <location>
        <begin position="125"/>
        <end position="128"/>
    </location>
    <ligand>
        <name>NAD(+)</name>
        <dbReference type="ChEBI" id="CHEBI:57540"/>
    </ligand>
</feature>
<feature type="binding site" evidence="1">
    <location>
        <position position="159"/>
    </location>
    <ligand>
        <name>(S)-2,3,4,5-tetrahydrodipicolinate</name>
        <dbReference type="ChEBI" id="CHEBI:16845"/>
    </ligand>
</feature>
<feature type="binding site" evidence="1">
    <location>
        <begin position="168"/>
        <end position="169"/>
    </location>
    <ligand>
        <name>(S)-2,3,4,5-tetrahydrodipicolinate</name>
        <dbReference type="ChEBI" id="CHEBI:16845"/>
    </ligand>
</feature>
<organism>
    <name type="scientific">Shewanella baltica (strain OS223)</name>
    <dbReference type="NCBI Taxonomy" id="407976"/>
    <lineage>
        <taxon>Bacteria</taxon>
        <taxon>Pseudomonadati</taxon>
        <taxon>Pseudomonadota</taxon>
        <taxon>Gammaproteobacteria</taxon>
        <taxon>Alteromonadales</taxon>
        <taxon>Shewanellaceae</taxon>
        <taxon>Shewanella</taxon>
    </lineage>
</organism>